<sequence>MSETPAQSSIKQERISYTPPESPVASHRSSTPLHVHTVPRALRMEEDSIHLPTHLRLQPIYWSRDDVAQWLKWAENEFSLRPIESNKFEMNGKALLLLTKEDFRYRSPHSGDVLYELLQHILKQRKSRMLFSPFFPPGDSIHTKPEVLLHQNHDEDNCVQRTPRTPAESVHHNPPTIELLHRPRSPITTNHRPSPDPEQQRPQRSPLDNMSRRLSPVEKAQGPRLQQENNHQETYPLSVSPVENNHCLPSSPWQESTRVIQLMPSPIMHPLILNPRHSHSVDFKQSRHSEDGMNREGKPINLSHREDLAYLNHIMVSMSPPEEHAMPIGRIADCRLLWDYVYQLLSDSRYENFIRWEDKESKIFRIVDPNGLARLWGNHKNRTNMTYEKMSRALRHYYKLNIIRKEPGQRLLFRFMKTPDEIMSGRTDRLEHLESQVLDEQTYQEDEPTIASPVGWPRGNLPTGTAGGVMEAGELGVAVKEETRE</sequence>
<feature type="chain" id="PRO_0000204122" description="Transcription factor ETV6">
    <location>
        <begin position="1"/>
        <end position="485"/>
    </location>
</feature>
<feature type="domain" description="PNT" evidence="4">
    <location>
        <begin position="41"/>
        <end position="125"/>
    </location>
</feature>
<feature type="DNA-binding region" description="ETS" evidence="3">
    <location>
        <begin position="335"/>
        <end position="416"/>
    </location>
</feature>
<feature type="region of interest" description="Disordered" evidence="5">
    <location>
        <begin position="1"/>
        <end position="32"/>
    </location>
</feature>
<feature type="region of interest" description="Disordered" evidence="5">
    <location>
        <begin position="157"/>
        <end position="210"/>
    </location>
</feature>
<feature type="region of interest" description="Disordered" evidence="5">
    <location>
        <begin position="440"/>
        <end position="485"/>
    </location>
</feature>
<feature type="compositionally biased region" description="Polar residues" evidence="5">
    <location>
        <begin position="1"/>
        <end position="10"/>
    </location>
</feature>
<feature type="modified residue" description="N6-acetyllysine; alternate" evidence="2">
    <location>
        <position position="11"/>
    </location>
</feature>
<feature type="modified residue" description="Phosphothreonine" evidence="2">
    <location>
        <position position="18"/>
    </location>
</feature>
<feature type="modified residue" description="Phosphoserine" evidence="2">
    <location>
        <position position="22"/>
    </location>
</feature>
<feature type="modified residue" description="Phosphothreonine" evidence="7">
    <location>
        <position position="165"/>
    </location>
</feature>
<feature type="modified residue" description="Phosphoserine" evidence="2">
    <location>
        <position position="215"/>
    </location>
</feature>
<feature type="modified residue" description="Phosphoserine" evidence="7">
    <location>
        <position position="240"/>
    </location>
</feature>
<feature type="modified residue" description="Phosphoserine" evidence="2">
    <location>
        <position position="251"/>
    </location>
</feature>
<feature type="modified residue" description="N6-acetyllysine; alternate" evidence="2">
    <location>
        <position position="298"/>
    </location>
</feature>
<feature type="modified residue" description="Phosphoserine" evidence="7">
    <location>
        <position position="319"/>
    </location>
</feature>
<feature type="cross-link" description="Glycyl lysine isopeptide (Lys-Gly) (interchain with G-Cter in SUMO2); alternate" evidence="2">
    <location>
        <position position="11"/>
    </location>
</feature>
<feature type="cross-link" description="Glycyl lysine isopeptide (Lys-Gly) (interchain with G-Cter in SUMO2)" evidence="2">
    <location>
        <position position="284"/>
    </location>
</feature>
<feature type="cross-link" description="Glycyl lysine isopeptide (Lys-Gly) (interchain with G-Cter in SUMO2); alternate" evidence="2">
    <location>
        <position position="298"/>
    </location>
</feature>
<feature type="cross-link" description="Glycyl lysine isopeptide (Lys-Gly) (interchain with G-Cter in SUMO2)" evidence="2">
    <location>
        <position position="399"/>
    </location>
</feature>
<feature type="cross-link" description="Glycyl lysine isopeptide (Lys-Gly) (interchain with G-Cter in SUMO2)" evidence="2">
    <location>
        <position position="417"/>
    </location>
</feature>
<feature type="helix" evidence="10">
    <location>
        <begin position="337"/>
        <end position="345"/>
    </location>
</feature>
<feature type="helix" evidence="10">
    <location>
        <begin position="348"/>
        <end position="350"/>
    </location>
</feature>
<feature type="turn" evidence="10">
    <location>
        <begin position="351"/>
        <end position="353"/>
    </location>
</feature>
<feature type="strand" evidence="10">
    <location>
        <begin position="354"/>
        <end position="358"/>
    </location>
</feature>
<feature type="turn" evidence="10">
    <location>
        <begin position="359"/>
        <end position="362"/>
    </location>
</feature>
<feature type="strand" evidence="10">
    <location>
        <begin position="363"/>
        <end position="367"/>
    </location>
</feature>
<feature type="helix" evidence="10">
    <location>
        <begin position="369"/>
        <end position="379"/>
    </location>
</feature>
<feature type="helix" evidence="10">
    <location>
        <begin position="387"/>
        <end position="399"/>
    </location>
</feature>
<feature type="strand" evidence="10">
    <location>
        <begin position="402"/>
        <end position="405"/>
    </location>
</feature>
<feature type="strand" evidence="10">
    <location>
        <begin position="412"/>
        <end position="417"/>
    </location>
</feature>
<feature type="helix" evidence="10">
    <location>
        <begin position="419"/>
        <end position="422"/>
    </location>
</feature>
<feature type="turn" evidence="8">
    <location>
        <begin position="423"/>
        <end position="429"/>
    </location>
</feature>
<feature type="helix" evidence="8">
    <location>
        <begin position="430"/>
        <end position="433"/>
    </location>
</feature>
<feature type="strand" evidence="9">
    <location>
        <begin position="451"/>
        <end position="453"/>
    </location>
</feature>
<reference key="1">
    <citation type="submission" date="1996-12" db="EMBL/GenBank/DDBJ databases">
        <authorList>
            <person name="Bernard O."/>
        </authorList>
    </citation>
    <scope>NUCLEOTIDE SEQUENCE [MRNA]</scope>
    <source>
        <strain>C57BL/6J</strain>
    </source>
</reference>
<reference key="2">
    <citation type="journal article" date="2010" name="Cell">
        <title>A tissue-specific atlas of mouse protein phosphorylation and expression.</title>
        <authorList>
            <person name="Huttlin E.L."/>
            <person name="Jedrychowski M.P."/>
            <person name="Elias J.E."/>
            <person name="Goswami T."/>
            <person name="Rad R."/>
            <person name="Beausoleil S.A."/>
            <person name="Villen J."/>
            <person name="Haas W."/>
            <person name="Sowa M.E."/>
            <person name="Gygi S.P."/>
        </authorList>
    </citation>
    <scope>PHOSPHORYLATION [LARGE SCALE ANALYSIS] AT THR-165; SER-240 AND SER-319</scope>
    <scope>IDENTIFICATION BY MASS SPECTROMETRY [LARGE SCALE ANALYSIS]</scope>
    <source>
        <tissue>Brown adipose tissue</tissue>
        <tissue>Kidney</tissue>
        <tissue>Lung</tissue>
        <tissue>Pancreas</tissue>
        <tissue>Spleen</tissue>
        <tissue>Testis</tissue>
    </source>
</reference>
<gene>
    <name type="primary">Etv6</name>
    <name type="synonym">Tel</name>
    <name type="synonym">Tel1</name>
</gene>
<proteinExistence type="evidence at protein level"/>
<keyword id="KW-0002">3D-structure</keyword>
<keyword id="KW-0007">Acetylation</keyword>
<keyword id="KW-0238">DNA-binding</keyword>
<keyword id="KW-1017">Isopeptide bond</keyword>
<keyword id="KW-0539">Nucleus</keyword>
<keyword id="KW-0597">Phosphoprotein</keyword>
<keyword id="KW-1185">Reference proteome</keyword>
<keyword id="KW-0678">Repressor</keyword>
<keyword id="KW-0804">Transcription</keyword>
<keyword id="KW-0805">Transcription regulation</keyword>
<keyword id="KW-0832">Ubl conjugation</keyword>
<comment type="function">
    <text evidence="2">Transcriptional repressor; binds to the DNA sequence 5'-CCGGAAGT-3'. Plays a role in hematopoiesis and malignant transformation.</text>
</comment>
<comment type="subunit">
    <text evidence="1">Can form homodimers or heterodimers with TEL2 or FLI1. Interacts with L3MBTL1 and HDAC9 (By similarity).</text>
</comment>
<comment type="subcellular location">
    <subcellularLocation>
        <location evidence="3">Nucleus</location>
    </subcellularLocation>
</comment>
<comment type="similarity">
    <text evidence="6">Belongs to the ETS family.</text>
</comment>
<evidence type="ECO:0000250" key="1"/>
<evidence type="ECO:0000250" key="2">
    <source>
        <dbReference type="UniProtKB" id="P41212"/>
    </source>
</evidence>
<evidence type="ECO:0000255" key="3">
    <source>
        <dbReference type="PROSITE-ProRule" id="PRU00237"/>
    </source>
</evidence>
<evidence type="ECO:0000255" key="4">
    <source>
        <dbReference type="PROSITE-ProRule" id="PRU00762"/>
    </source>
</evidence>
<evidence type="ECO:0000256" key="5">
    <source>
        <dbReference type="SAM" id="MobiDB-lite"/>
    </source>
</evidence>
<evidence type="ECO:0000305" key="6"/>
<evidence type="ECO:0007744" key="7">
    <source>
    </source>
</evidence>
<evidence type="ECO:0007829" key="8">
    <source>
        <dbReference type="PDB" id="2LF7"/>
    </source>
</evidence>
<evidence type="ECO:0007829" key="9">
    <source>
        <dbReference type="PDB" id="2LF8"/>
    </source>
</evidence>
<evidence type="ECO:0007829" key="10">
    <source>
        <dbReference type="PDB" id="4MHG"/>
    </source>
</evidence>
<accession>P97360</accession>
<name>ETV6_MOUSE</name>
<organism>
    <name type="scientific">Mus musculus</name>
    <name type="common">Mouse</name>
    <dbReference type="NCBI Taxonomy" id="10090"/>
    <lineage>
        <taxon>Eukaryota</taxon>
        <taxon>Metazoa</taxon>
        <taxon>Chordata</taxon>
        <taxon>Craniata</taxon>
        <taxon>Vertebrata</taxon>
        <taxon>Euteleostomi</taxon>
        <taxon>Mammalia</taxon>
        <taxon>Eutheria</taxon>
        <taxon>Euarchontoglires</taxon>
        <taxon>Glires</taxon>
        <taxon>Rodentia</taxon>
        <taxon>Myomorpha</taxon>
        <taxon>Muroidea</taxon>
        <taxon>Muridae</taxon>
        <taxon>Murinae</taxon>
        <taxon>Mus</taxon>
        <taxon>Mus</taxon>
    </lineage>
</organism>
<protein>
    <recommendedName>
        <fullName>Transcription factor ETV6</fullName>
    </recommendedName>
    <alternativeName>
        <fullName>ETS translocation variant 6</fullName>
    </alternativeName>
    <alternativeName>
        <fullName>ETS-related protein Tel1</fullName>
        <shortName>Tel</shortName>
    </alternativeName>
</protein>
<dbReference type="EMBL" id="Y07915">
    <property type="protein sequence ID" value="CAA69220.1"/>
    <property type="molecule type" value="mRNA"/>
</dbReference>
<dbReference type="CCDS" id="CCDS39677.1"/>
<dbReference type="RefSeq" id="NP_031987.3">
    <property type="nucleotide sequence ID" value="NM_007961.4"/>
</dbReference>
<dbReference type="PDB" id="2LF7">
    <property type="method" value="NMR"/>
    <property type="chains" value="A=335-436"/>
</dbReference>
<dbReference type="PDB" id="2LF8">
    <property type="method" value="NMR"/>
    <property type="chains" value="A=335-458"/>
</dbReference>
<dbReference type="PDB" id="2MD5">
    <property type="method" value="NMR"/>
    <property type="chains" value="A=329-426"/>
</dbReference>
<dbReference type="PDB" id="4MHG">
    <property type="method" value="X-ray"/>
    <property type="resolution" value="2.20 A"/>
    <property type="chains" value="A=329-426"/>
</dbReference>
<dbReference type="PDB" id="8E66">
    <property type="method" value="X-ray"/>
    <property type="resolution" value="2.35 A"/>
    <property type="chains" value="A/F=329-425"/>
</dbReference>
<dbReference type="PDB" id="8E67">
    <property type="method" value="X-ray"/>
    <property type="resolution" value="2.30 A"/>
    <property type="chains" value="A/F/I/L=329-426"/>
</dbReference>
<dbReference type="PDBsum" id="2LF7"/>
<dbReference type="PDBsum" id="2LF8"/>
<dbReference type="PDBsum" id="2MD5"/>
<dbReference type="PDBsum" id="4MHG"/>
<dbReference type="PDBsum" id="8E66"/>
<dbReference type="PDBsum" id="8E67"/>
<dbReference type="BMRB" id="P97360"/>
<dbReference type="SMR" id="P97360"/>
<dbReference type="BioGRID" id="199540">
    <property type="interactions" value="7"/>
</dbReference>
<dbReference type="FunCoup" id="P97360">
    <property type="interactions" value="2518"/>
</dbReference>
<dbReference type="STRING" id="10090.ENSMUSP00000079818"/>
<dbReference type="iPTMnet" id="P97360"/>
<dbReference type="PhosphoSitePlus" id="P97360"/>
<dbReference type="jPOST" id="P97360"/>
<dbReference type="PaxDb" id="10090-ENSMUSP00000079818"/>
<dbReference type="PeptideAtlas" id="P97360"/>
<dbReference type="ProteomicsDB" id="275803"/>
<dbReference type="Pumba" id="P97360"/>
<dbReference type="Antibodypedia" id="634">
    <property type="antibodies" value="393 antibodies from 35 providers"/>
</dbReference>
<dbReference type="DNASU" id="14011"/>
<dbReference type="Ensembl" id="ENSMUST00000081028.13">
    <property type="protein sequence ID" value="ENSMUSP00000079818.7"/>
    <property type="gene ID" value="ENSMUSG00000030199.17"/>
</dbReference>
<dbReference type="GeneID" id="14011"/>
<dbReference type="KEGG" id="mmu:14011"/>
<dbReference type="UCSC" id="uc009eke.2">
    <property type="organism name" value="mouse"/>
</dbReference>
<dbReference type="AGR" id="MGI:109336"/>
<dbReference type="CTD" id="2120"/>
<dbReference type="MGI" id="MGI:109336">
    <property type="gene designation" value="Etv6"/>
</dbReference>
<dbReference type="VEuPathDB" id="HostDB:ENSMUSG00000030199"/>
<dbReference type="eggNOG" id="KOG3804">
    <property type="taxonomic scope" value="Eukaryota"/>
</dbReference>
<dbReference type="GeneTree" id="ENSGT00940000159508"/>
<dbReference type="InParanoid" id="P97360"/>
<dbReference type="OMA" id="AFMNHIM"/>
<dbReference type="OrthoDB" id="6408625at2759"/>
<dbReference type="PhylomeDB" id="P97360"/>
<dbReference type="TreeFam" id="TF318679"/>
<dbReference type="BioGRID-ORCS" id="14011">
    <property type="hits" value="6 hits in 82 CRISPR screens"/>
</dbReference>
<dbReference type="ChiTaRS" id="Etv6">
    <property type="organism name" value="mouse"/>
</dbReference>
<dbReference type="EvolutionaryTrace" id="P97360"/>
<dbReference type="PRO" id="PR:P97360"/>
<dbReference type="Proteomes" id="UP000000589">
    <property type="component" value="Chromosome 6"/>
</dbReference>
<dbReference type="RNAct" id="P97360">
    <property type="molecule type" value="protein"/>
</dbReference>
<dbReference type="Bgee" id="ENSMUSG00000030199">
    <property type="expression patterns" value="Expressed in embryonic post-anal tail and 239 other cell types or tissues"/>
</dbReference>
<dbReference type="ExpressionAtlas" id="P97360">
    <property type="expression patterns" value="baseline and differential"/>
</dbReference>
<dbReference type="GO" id="GO:0005829">
    <property type="term" value="C:cytosol"/>
    <property type="evidence" value="ECO:0007669"/>
    <property type="project" value="Ensembl"/>
</dbReference>
<dbReference type="GO" id="GO:0005730">
    <property type="term" value="C:nucleolus"/>
    <property type="evidence" value="ECO:0007669"/>
    <property type="project" value="Ensembl"/>
</dbReference>
<dbReference type="GO" id="GO:0003677">
    <property type="term" value="F:DNA binding"/>
    <property type="evidence" value="ECO:0000314"/>
    <property type="project" value="MGI"/>
</dbReference>
<dbReference type="GO" id="GO:0001228">
    <property type="term" value="F:DNA-binding transcription activator activity, RNA polymerase II-specific"/>
    <property type="evidence" value="ECO:0000314"/>
    <property type="project" value="NTNU_SB"/>
</dbReference>
<dbReference type="GO" id="GO:0003700">
    <property type="term" value="F:DNA-binding transcription factor activity"/>
    <property type="evidence" value="ECO:0000314"/>
    <property type="project" value="MGI"/>
</dbReference>
<dbReference type="GO" id="GO:0001227">
    <property type="term" value="F:DNA-binding transcription repressor activity, RNA polymerase II-specific"/>
    <property type="evidence" value="ECO:0007669"/>
    <property type="project" value="Ensembl"/>
</dbReference>
<dbReference type="GO" id="GO:0019904">
    <property type="term" value="F:protein domain specific binding"/>
    <property type="evidence" value="ECO:0007669"/>
    <property type="project" value="Ensembl"/>
</dbReference>
<dbReference type="GO" id="GO:0000978">
    <property type="term" value="F:RNA polymerase II cis-regulatory region sequence-specific DNA binding"/>
    <property type="evidence" value="ECO:0000314"/>
    <property type="project" value="NTNU_SB"/>
</dbReference>
<dbReference type="GO" id="GO:0030154">
    <property type="term" value="P:cell differentiation"/>
    <property type="evidence" value="ECO:0000314"/>
    <property type="project" value="MGI"/>
</dbReference>
<dbReference type="GO" id="GO:0071425">
    <property type="term" value="P:hematopoietic stem cell proliferation"/>
    <property type="evidence" value="ECO:0000250"/>
    <property type="project" value="UniProtKB"/>
</dbReference>
<dbReference type="GO" id="GO:0097152">
    <property type="term" value="P:mesenchymal cell apoptotic process"/>
    <property type="evidence" value="ECO:0000315"/>
    <property type="project" value="MGI"/>
</dbReference>
<dbReference type="GO" id="GO:0022008">
    <property type="term" value="P:neurogenesis"/>
    <property type="evidence" value="ECO:0000315"/>
    <property type="project" value="MGI"/>
</dbReference>
<dbReference type="GO" id="GO:0045944">
    <property type="term" value="P:positive regulation of transcription by RNA polymerase II"/>
    <property type="evidence" value="ECO:0000314"/>
    <property type="project" value="NTNU_SB"/>
</dbReference>
<dbReference type="GO" id="GO:0006355">
    <property type="term" value="P:regulation of DNA-templated transcription"/>
    <property type="evidence" value="ECO:0000314"/>
    <property type="project" value="MGI"/>
</dbReference>
<dbReference type="GO" id="GO:0007296">
    <property type="term" value="P:vitellogenesis"/>
    <property type="evidence" value="ECO:0000315"/>
    <property type="project" value="MGI"/>
</dbReference>
<dbReference type="CDD" id="cd08535">
    <property type="entry name" value="SAM_PNT-Tel_Yan"/>
    <property type="match status" value="1"/>
</dbReference>
<dbReference type="FunFam" id="1.10.150.50:FF:000030">
    <property type="entry name" value="transcription factor ETV6"/>
    <property type="match status" value="1"/>
</dbReference>
<dbReference type="FunFam" id="1.10.10.10:FF:000176">
    <property type="entry name" value="transcription factor ETV6 isoform X2"/>
    <property type="match status" value="1"/>
</dbReference>
<dbReference type="Gene3D" id="1.10.150.50">
    <property type="entry name" value="Transcription Factor, Ets-1"/>
    <property type="match status" value="1"/>
</dbReference>
<dbReference type="Gene3D" id="1.10.10.10">
    <property type="entry name" value="Winged helix-like DNA-binding domain superfamily/Winged helix DNA-binding domain"/>
    <property type="match status" value="1"/>
</dbReference>
<dbReference type="InterPro" id="IPR000418">
    <property type="entry name" value="Ets_dom"/>
</dbReference>
<dbReference type="InterPro" id="IPR046328">
    <property type="entry name" value="ETS_fam"/>
</dbReference>
<dbReference type="InterPro" id="IPR003118">
    <property type="entry name" value="Pointed_dom"/>
</dbReference>
<dbReference type="InterPro" id="IPR013761">
    <property type="entry name" value="SAM/pointed_sf"/>
</dbReference>
<dbReference type="InterPro" id="IPR036388">
    <property type="entry name" value="WH-like_DNA-bd_sf"/>
</dbReference>
<dbReference type="InterPro" id="IPR036390">
    <property type="entry name" value="WH_DNA-bd_sf"/>
</dbReference>
<dbReference type="PANTHER" id="PTHR11849">
    <property type="entry name" value="ETS"/>
    <property type="match status" value="1"/>
</dbReference>
<dbReference type="PANTHER" id="PTHR11849:SF19">
    <property type="entry name" value="TRANSCRIPTION FACTOR ETV6"/>
    <property type="match status" value="1"/>
</dbReference>
<dbReference type="Pfam" id="PF00178">
    <property type="entry name" value="Ets"/>
    <property type="match status" value="1"/>
</dbReference>
<dbReference type="Pfam" id="PF02198">
    <property type="entry name" value="SAM_PNT"/>
    <property type="match status" value="1"/>
</dbReference>
<dbReference type="PRINTS" id="PR00454">
    <property type="entry name" value="ETSDOMAIN"/>
</dbReference>
<dbReference type="SMART" id="SM00413">
    <property type="entry name" value="ETS"/>
    <property type="match status" value="1"/>
</dbReference>
<dbReference type="SMART" id="SM00251">
    <property type="entry name" value="SAM_PNT"/>
    <property type="match status" value="1"/>
</dbReference>
<dbReference type="SUPFAM" id="SSF47769">
    <property type="entry name" value="SAM/Pointed domain"/>
    <property type="match status" value="1"/>
</dbReference>
<dbReference type="SUPFAM" id="SSF46785">
    <property type="entry name" value="Winged helix' DNA-binding domain"/>
    <property type="match status" value="1"/>
</dbReference>
<dbReference type="PROSITE" id="PS00346">
    <property type="entry name" value="ETS_DOMAIN_2"/>
    <property type="match status" value="1"/>
</dbReference>
<dbReference type="PROSITE" id="PS50061">
    <property type="entry name" value="ETS_DOMAIN_3"/>
    <property type="match status" value="1"/>
</dbReference>
<dbReference type="PROSITE" id="PS51433">
    <property type="entry name" value="PNT"/>
    <property type="match status" value="1"/>
</dbReference>